<gene>
    <name evidence="1" type="primary">ilvC</name>
    <name type="ordered locus">Saci_1559</name>
</gene>
<proteinExistence type="evidence at protein level"/>
<feature type="chain" id="PRO_0000151399" description="Ketol-acid reductoisomerase (NADP(+))">
    <location>
        <begin position="1"/>
        <end position="332"/>
    </location>
</feature>
<feature type="domain" description="KARI N-terminal Rossmann" evidence="2">
    <location>
        <begin position="2"/>
        <end position="182"/>
    </location>
</feature>
<feature type="domain" description="KARI C-terminal knotted" evidence="3">
    <location>
        <begin position="183"/>
        <end position="328"/>
    </location>
</feature>
<feature type="active site" evidence="1">
    <location>
        <position position="108"/>
    </location>
</feature>
<feature type="binding site" evidence="1">
    <location>
        <begin position="25"/>
        <end position="28"/>
    </location>
    <ligand>
        <name>NADP(+)</name>
        <dbReference type="ChEBI" id="CHEBI:58349"/>
    </ligand>
</feature>
<feature type="binding site" evidence="1">
    <location>
        <position position="53"/>
    </location>
    <ligand>
        <name>NADP(+)</name>
        <dbReference type="ChEBI" id="CHEBI:58349"/>
    </ligand>
</feature>
<feature type="binding site" evidence="1">
    <location>
        <begin position="83"/>
        <end position="86"/>
    </location>
    <ligand>
        <name>NADP(+)</name>
        <dbReference type="ChEBI" id="CHEBI:58349"/>
    </ligand>
</feature>
<feature type="binding site" evidence="1">
    <location>
        <position position="134"/>
    </location>
    <ligand>
        <name>NADP(+)</name>
        <dbReference type="ChEBI" id="CHEBI:58349"/>
    </ligand>
</feature>
<feature type="binding site" evidence="1">
    <location>
        <position position="191"/>
    </location>
    <ligand>
        <name>Mg(2+)</name>
        <dbReference type="ChEBI" id="CHEBI:18420"/>
        <label>1</label>
    </ligand>
</feature>
<feature type="binding site" evidence="1">
    <location>
        <position position="191"/>
    </location>
    <ligand>
        <name>Mg(2+)</name>
        <dbReference type="ChEBI" id="CHEBI:18420"/>
        <label>2</label>
    </ligand>
</feature>
<feature type="binding site" evidence="1">
    <location>
        <position position="195"/>
    </location>
    <ligand>
        <name>Mg(2+)</name>
        <dbReference type="ChEBI" id="CHEBI:18420"/>
        <label>1</label>
    </ligand>
</feature>
<feature type="binding site" evidence="1">
    <location>
        <position position="227"/>
    </location>
    <ligand>
        <name>Mg(2+)</name>
        <dbReference type="ChEBI" id="CHEBI:18420"/>
        <label>2</label>
    </ligand>
</feature>
<feature type="binding site" evidence="1">
    <location>
        <position position="231"/>
    </location>
    <ligand>
        <name>Mg(2+)</name>
        <dbReference type="ChEBI" id="CHEBI:18420"/>
        <label>2</label>
    </ligand>
</feature>
<feature type="binding site" evidence="1">
    <location>
        <position position="252"/>
    </location>
    <ligand>
        <name>substrate</name>
    </ligand>
</feature>
<feature type="helix" evidence="4">
    <location>
        <begin position="7"/>
        <end position="9"/>
    </location>
</feature>
<feature type="helix" evidence="4">
    <location>
        <begin position="12"/>
        <end position="14"/>
    </location>
</feature>
<feature type="turn" evidence="4">
    <location>
        <begin position="15"/>
        <end position="17"/>
    </location>
</feature>
<feature type="strand" evidence="4">
    <location>
        <begin position="18"/>
        <end position="23"/>
    </location>
</feature>
<feature type="helix" evidence="4">
    <location>
        <begin position="27"/>
        <end position="38"/>
    </location>
</feature>
<feature type="strand" evidence="4">
    <location>
        <begin position="42"/>
        <end position="51"/>
    </location>
</feature>
<feature type="helix" evidence="4">
    <location>
        <begin position="52"/>
        <end position="59"/>
    </location>
</feature>
<feature type="helix" evidence="4">
    <location>
        <begin position="67"/>
        <end position="72"/>
    </location>
</feature>
<feature type="strand" evidence="4">
    <location>
        <begin position="75"/>
        <end position="79"/>
    </location>
</feature>
<feature type="helix" evidence="4">
    <location>
        <begin position="83"/>
        <end position="85"/>
    </location>
</feature>
<feature type="helix" evidence="4">
    <location>
        <begin position="86"/>
        <end position="93"/>
    </location>
</feature>
<feature type="helix" evidence="4">
    <location>
        <begin position="95"/>
        <end position="97"/>
    </location>
</feature>
<feature type="strand" evidence="4">
    <location>
        <begin position="103"/>
        <end position="109"/>
    </location>
</feature>
<feature type="helix" evidence="4">
    <location>
        <begin position="110"/>
        <end position="113"/>
    </location>
</feature>
<feature type="strand" evidence="4">
    <location>
        <begin position="123"/>
        <end position="132"/>
    </location>
</feature>
<feature type="helix" evidence="4">
    <location>
        <begin position="134"/>
        <end position="142"/>
    </location>
</feature>
<feature type="strand" evidence="4">
    <location>
        <begin position="149"/>
        <end position="155"/>
    </location>
</feature>
<feature type="strand" evidence="4">
    <location>
        <begin position="157"/>
        <end position="159"/>
    </location>
</feature>
<feature type="helix" evidence="4">
    <location>
        <begin position="161"/>
        <end position="171"/>
    </location>
</feature>
<feature type="helix" evidence="4">
    <location>
        <begin position="174"/>
        <end position="176"/>
    </location>
</feature>
<feature type="strand" evidence="4">
    <location>
        <begin position="179"/>
        <end position="181"/>
    </location>
</feature>
<feature type="helix" evidence="4">
    <location>
        <begin position="184"/>
        <end position="197"/>
    </location>
</feature>
<feature type="turn" evidence="4">
    <location>
        <begin position="198"/>
        <end position="200"/>
    </location>
</feature>
<feature type="helix" evidence="4">
    <location>
        <begin position="201"/>
        <end position="216"/>
    </location>
</feature>
<feature type="helix" evidence="4">
    <location>
        <begin position="221"/>
        <end position="228"/>
    </location>
</feature>
<feature type="turn" evidence="4">
    <location>
        <begin position="229"/>
        <end position="231"/>
    </location>
</feature>
<feature type="helix" evidence="4">
    <location>
        <begin position="232"/>
        <end position="250"/>
    </location>
</feature>
<feature type="helix" evidence="4">
    <location>
        <begin position="253"/>
        <end position="266"/>
    </location>
</feature>
<feature type="helix" evidence="4">
    <location>
        <begin position="269"/>
        <end position="283"/>
    </location>
</feature>
<feature type="helix" evidence="4">
    <location>
        <begin position="286"/>
        <end position="296"/>
    </location>
</feature>
<feature type="helix" evidence="4">
    <location>
        <begin position="300"/>
        <end position="310"/>
    </location>
</feature>
<feature type="helix" evidence="4">
    <location>
        <begin position="313"/>
        <end position="328"/>
    </location>
</feature>
<name>ILVC_SULAC</name>
<reference key="1">
    <citation type="journal article" date="2005" name="J. Bacteriol.">
        <title>The genome of Sulfolobus acidocaldarius, a model organism of the Crenarchaeota.</title>
        <authorList>
            <person name="Chen L."/>
            <person name="Bruegger K."/>
            <person name="Skovgaard M."/>
            <person name="Redder P."/>
            <person name="She Q."/>
            <person name="Torarinsson E."/>
            <person name="Greve B."/>
            <person name="Awayez M."/>
            <person name="Zibat A."/>
            <person name="Klenk H.-P."/>
            <person name="Garrett R.A."/>
        </authorList>
    </citation>
    <scope>NUCLEOTIDE SEQUENCE [LARGE SCALE GENOMIC DNA]</scope>
    <source>
        <strain>ATCC 33909 / DSM 639 / JCM 8929 / NBRC 15157 / NCIMB 11770</strain>
    </source>
</reference>
<organism>
    <name type="scientific">Sulfolobus acidocaldarius (strain ATCC 33909 / DSM 639 / JCM 8929 / NBRC 15157 / NCIMB 11770)</name>
    <dbReference type="NCBI Taxonomy" id="330779"/>
    <lineage>
        <taxon>Archaea</taxon>
        <taxon>Thermoproteota</taxon>
        <taxon>Thermoprotei</taxon>
        <taxon>Sulfolobales</taxon>
        <taxon>Sulfolobaceae</taxon>
        <taxon>Sulfolobus</taxon>
    </lineage>
</organism>
<accession>Q4J8K9</accession>
<protein>
    <recommendedName>
        <fullName evidence="1">Ketol-acid reductoisomerase (NADP(+))</fullName>
        <shortName evidence="1">KARI</shortName>
        <ecNumber evidence="1">1.1.1.86</ecNumber>
    </recommendedName>
    <alternativeName>
        <fullName evidence="1">Acetohydroxy-acid isomeroreductase</fullName>
        <shortName evidence="1">AHIR</shortName>
    </alternativeName>
    <alternativeName>
        <fullName evidence="1">Alpha-keto-beta-hydroxylacyl reductoisomerase</fullName>
    </alternativeName>
    <alternativeName>
        <fullName evidence="1">Ketol-acid reductoisomerase type 1</fullName>
    </alternativeName>
    <alternativeName>
        <fullName evidence="1">Ketol-acid reductoisomerase type I</fullName>
    </alternativeName>
</protein>
<dbReference type="EC" id="1.1.1.86" evidence="1"/>
<dbReference type="EMBL" id="CP000077">
    <property type="protein sequence ID" value="AAY80872.1"/>
    <property type="molecule type" value="Genomic_DNA"/>
</dbReference>
<dbReference type="RefSeq" id="WP_011278374.1">
    <property type="nucleotide sequence ID" value="NC_007181.1"/>
</dbReference>
<dbReference type="PDB" id="5YEQ">
    <property type="method" value="X-ray"/>
    <property type="resolution" value="1.75 A"/>
    <property type="chains" value="A/B=1-332"/>
</dbReference>
<dbReference type="PDBsum" id="5YEQ"/>
<dbReference type="SMR" id="Q4J8K9"/>
<dbReference type="STRING" id="330779.Saci_1559"/>
<dbReference type="GeneID" id="14552052"/>
<dbReference type="GeneID" id="78441902"/>
<dbReference type="KEGG" id="sai:Saci_1559"/>
<dbReference type="PATRIC" id="fig|330779.12.peg.1499"/>
<dbReference type="eggNOG" id="arCOG04465">
    <property type="taxonomic scope" value="Archaea"/>
</dbReference>
<dbReference type="HOGENOM" id="CLU_033821_0_1_2"/>
<dbReference type="UniPathway" id="UPA00047">
    <property type="reaction ID" value="UER00056"/>
</dbReference>
<dbReference type="UniPathway" id="UPA00049">
    <property type="reaction ID" value="UER00060"/>
</dbReference>
<dbReference type="Proteomes" id="UP000001018">
    <property type="component" value="Chromosome"/>
</dbReference>
<dbReference type="GO" id="GO:0004455">
    <property type="term" value="F:ketol-acid reductoisomerase activity"/>
    <property type="evidence" value="ECO:0007669"/>
    <property type="project" value="UniProtKB-UniRule"/>
</dbReference>
<dbReference type="GO" id="GO:0000287">
    <property type="term" value="F:magnesium ion binding"/>
    <property type="evidence" value="ECO:0007669"/>
    <property type="project" value="UniProtKB-UniRule"/>
</dbReference>
<dbReference type="GO" id="GO:0050661">
    <property type="term" value="F:NADP binding"/>
    <property type="evidence" value="ECO:0007669"/>
    <property type="project" value="InterPro"/>
</dbReference>
<dbReference type="GO" id="GO:0009097">
    <property type="term" value="P:isoleucine biosynthetic process"/>
    <property type="evidence" value="ECO:0007669"/>
    <property type="project" value="UniProtKB-UniRule"/>
</dbReference>
<dbReference type="GO" id="GO:0009099">
    <property type="term" value="P:L-valine biosynthetic process"/>
    <property type="evidence" value="ECO:0007669"/>
    <property type="project" value="UniProtKB-UniRule"/>
</dbReference>
<dbReference type="FunFam" id="3.40.50.720:FF:000023">
    <property type="entry name" value="Ketol-acid reductoisomerase (NADP(+))"/>
    <property type="match status" value="1"/>
</dbReference>
<dbReference type="Gene3D" id="6.10.240.10">
    <property type="match status" value="1"/>
</dbReference>
<dbReference type="Gene3D" id="3.40.50.720">
    <property type="entry name" value="NAD(P)-binding Rossmann-like Domain"/>
    <property type="match status" value="1"/>
</dbReference>
<dbReference type="HAMAP" id="MF_00435">
    <property type="entry name" value="IlvC"/>
    <property type="match status" value="1"/>
</dbReference>
<dbReference type="InterPro" id="IPR008927">
    <property type="entry name" value="6-PGluconate_DH-like_C_sf"/>
</dbReference>
<dbReference type="InterPro" id="IPR013023">
    <property type="entry name" value="KARI"/>
</dbReference>
<dbReference type="InterPro" id="IPR000506">
    <property type="entry name" value="KARI_C"/>
</dbReference>
<dbReference type="InterPro" id="IPR013116">
    <property type="entry name" value="KARI_N"/>
</dbReference>
<dbReference type="InterPro" id="IPR014359">
    <property type="entry name" value="KARI_prok"/>
</dbReference>
<dbReference type="InterPro" id="IPR036291">
    <property type="entry name" value="NAD(P)-bd_dom_sf"/>
</dbReference>
<dbReference type="NCBIfam" id="TIGR00465">
    <property type="entry name" value="ilvC"/>
    <property type="match status" value="1"/>
</dbReference>
<dbReference type="NCBIfam" id="NF004017">
    <property type="entry name" value="PRK05479.1"/>
    <property type="match status" value="1"/>
</dbReference>
<dbReference type="PANTHER" id="PTHR21371">
    <property type="entry name" value="KETOL-ACID REDUCTOISOMERASE, MITOCHONDRIAL"/>
    <property type="match status" value="1"/>
</dbReference>
<dbReference type="PANTHER" id="PTHR21371:SF1">
    <property type="entry name" value="KETOL-ACID REDUCTOISOMERASE, MITOCHONDRIAL"/>
    <property type="match status" value="1"/>
</dbReference>
<dbReference type="Pfam" id="PF01450">
    <property type="entry name" value="KARI_C"/>
    <property type="match status" value="1"/>
</dbReference>
<dbReference type="Pfam" id="PF07991">
    <property type="entry name" value="KARI_N"/>
    <property type="match status" value="1"/>
</dbReference>
<dbReference type="PIRSF" id="PIRSF000116">
    <property type="entry name" value="IlvC_gammaproteo"/>
    <property type="match status" value="1"/>
</dbReference>
<dbReference type="SUPFAM" id="SSF48179">
    <property type="entry name" value="6-phosphogluconate dehydrogenase C-terminal domain-like"/>
    <property type="match status" value="1"/>
</dbReference>
<dbReference type="SUPFAM" id="SSF51735">
    <property type="entry name" value="NAD(P)-binding Rossmann-fold domains"/>
    <property type="match status" value="1"/>
</dbReference>
<dbReference type="PROSITE" id="PS51851">
    <property type="entry name" value="KARI_C"/>
    <property type="match status" value="1"/>
</dbReference>
<dbReference type="PROSITE" id="PS51850">
    <property type="entry name" value="KARI_N"/>
    <property type="match status" value="1"/>
</dbReference>
<comment type="function">
    <text evidence="1">Involved in the biosynthesis of branched-chain amino acids (BCAA). Catalyzes an alkyl-migration followed by a ketol-acid reduction of (S)-2-acetolactate (S2AL) to yield (R)-2,3-dihydroxy-isovalerate. In the isomerase reaction, S2AL is rearranged via a Mg-dependent methyl migration to produce 3-hydroxy-3-methyl-2-ketobutyrate (HMKB). In the reductase reaction, this 2-ketoacid undergoes a metal-dependent reduction by NADPH to yield (R)-2,3-dihydroxy-isovalerate.</text>
</comment>
<comment type="catalytic activity">
    <reaction evidence="1">
        <text>(2R)-2,3-dihydroxy-3-methylbutanoate + NADP(+) = (2S)-2-acetolactate + NADPH + H(+)</text>
        <dbReference type="Rhea" id="RHEA:22068"/>
        <dbReference type="ChEBI" id="CHEBI:15378"/>
        <dbReference type="ChEBI" id="CHEBI:49072"/>
        <dbReference type="ChEBI" id="CHEBI:57783"/>
        <dbReference type="ChEBI" id="CHEBI:58349"/>
        <dbReference type="ChEBI" id="CHEBI:58476"/>
        <dbReference type="EC" id="1.1.1.86"/>
    </reaction>
</comment>
<comment type="catalytic activity">
    <reaction evidence="1">
        <text>(2R,3R)-2,3-dihydroxy-3-methylpentanoate + NADP(+) = (S)-2-ethyl-2-hydroxy-3-oxobutanoate + NADPH + H(+)</text>
        <dbReference type="Rhea" id="RHEA:13493"/>
        <dbReference type="ChEBI" id="CHEBI:15378"/>
        <dbReference type="ChEBI" id="CHEBI:49256"/>
        <dbReference type="ChEBI" id="CHEBI:49258"/>
        <dbReference type="ChEBI" id="CHEBI:57783"/>
        <dbReference type="ChEBI" id="CHEBI:58349"/>
        <dbReference type="EC" id="1.1.1.86"/>
    </reaction>
</comment>
<comment type="cofactor">
    <cofactor evidence="1">
        <name>Mg(2+)</name>
        <dbReference type="ChEBI" id="CHEBI:18420"/>
    </cofactor>
    <text evidence="1">Binds 2 magnesium ions per subunit.</text>
</comment>
<comment type="pathway">
    <text evidence="1">Amino-acid biosynthesis; L-isoleucine biosynthesis; L-isoleucine from 2-oxobutanoate: step 2/4.</text>
</comment>
<comment type="pathway">
    <text evidence="1">Amino-acid biosynthesis; L-valine biosynthesis; L-valine from pyruvate: step 2/4.</text>
</comment>
<comment type="similarity">
    <text evidence="1">Belongs to the ketol-acid reductoisomerase family.</text>
</comment>
<sequence>MAKIYTDKDVSLDVIKEKRVAVLGYGSQGRAWALNLRDSGIKVSVGLEREGNSWKQAENDGFKPLRTEEAVRNSDIIIFLLPDMIQRTVYLERVKPYLKEGMDLVFAHGFNIHYRLIEPPSNVDVYMIAPKAPGPIVREYFAKGGGVPALVATYQDHSGKALQKALAVAKAIGATRAGVIETTFKEETETDLFGEQVDLVGGVMQLMRYAFQTLVEAGYQPEVAYFETINEMKLIVDLVYEKGFSGMLTAVSDTAKYGGMTVGKMVIDESVKERMKKALDNIRSGKFAEKWVEEYGKGANTIKEGMKEVDNSTEEKVGRSLRDIILRGKPKS</sequence>
<evidence type="ECO:0000255" key="1">
    <source>
        <dbReference type="HAMAP-Rule" id="MF_00435"/>
    </source>
</evidence>
<evidence type="ECO:0000255" key="2">
    <source>
        <dbReference type="PROSITE-ProRule" id="PRU01197"/>
    </source>
</evidence>
<evidence type="ECO:0000255" key="3">
    <source>
        <dbReference type="PROSITE-ProRule" id="PRU01198"/>
    </source>
</evidence>
<evidence type="ECO:0007829" key="4">
    <source>
        <dbReference type="PDB" id="5YEQ"/>
    </source>
</evidence>
<keyword id="KW-0002">3D-structure</keyword>
<keyword id="KW-0028">Amino-acid biosynthesis</keyword>
<keyword id="KW-0100">Branched-chain amino acid biosynthesis</keyword>
<keyword id="KW-0460">Magnesium</keyword>
<keyword id="KW-0479">Metal-binding</keyword>
<keyword id="KW-0521">NADP</keyword>
<keyword id="KW-0560">Oxidoreductase</keyword>
<keyword id="KW-1185">Reference proteome</keyword>